<comment type="cofactor">
    <cofactor evidence="1">
        <name>Zn(2+)</name>
        <dbReference type="ChEBI" id="CHEBI:29105"/>
    </cofactor>
    <text evidence="1">Binds 1 zinc ion.</text>
</comment>
<comment type="subcellular location">
    <subcellularLocation>
        <location evidence="1">Cytoplasm</location>
    </subcellularLocation>
</comment>
<comment type="similarity">
    <text evidence="1">Belongs to the SprT family.</text>
</comment>
<feature type="chain" id="PRO_1000148320" description="Protein SprT-like">
    <location>
        <begin position="1"/>
        <end position="152"/>
    </location>
</feature>
<feature type="domain" description="SprT-like" evidence="1">
    <location>
        <begin position="7"/>
        <end position="148"/>
    </location>
</feature>
<feature type="active site" evidence="1">
    <location>
        <position position="68"/>
    </location>
</feature>
<feature type="binding site" evidence="1">
    <location>
        <position position="67"/>
    </location>
    <ligand>
        <name>Zn(2+)</name>
        <dbReference type="ChEBI" id="CHEBI:29105"/>
    </ligand>
</feature>
<feature type="binding site" evidence="1">
    <location>
        <position position="71"/>
    </location>
    <ligand>
        <name>Zn(2+)</name>
        <dbReference type="ChEBI" id="CHEBI:29105"/>
    </ligand>
</feature>
<dbReference type="EMBL" id="CP001407">
    <property type="protein sequence ID" value="ACO28537.1"/>
    <property type="molecule type" value="Genomic_DNA"/>
</dbReference>
<dbReference type="RefSeq" id="WP_000344244.1">
    <property type="nucleotide sequence ID" value="NZ_CP009318.1"/>
</dbReference>
<dbReference type="KEGG" id="bcx:BCA_0293"/>
<dbReference type="PATRIC" id="fig|572264.18.peg.317"/>
<dbReference type="Proteomes" id="UP000002210">
    <property type="component" value="Chromosome"/>
</dbReference>
<dbReference type="GO" id="GO:0005737">
    <property type="term" value="C:cytoplasm"/>
    <property type="evidence" value="ECO:0007669"/>
    <property type="project" value="UniProtKB-SubCell"/>
</dbReference>
<dbReference type="GO" id="GO:0008270">
    <property type="term" value="F:zinc ion binding"/>
    <property type="evidence" value="ECO:0007669"/>
    <property type="project" value="UniProtKB-UniRule"/>
</dbReference>
<dbReference type="GO" id="GO:0006950">
    <property type="term" value="P:response to stress"/>
    <property type="evidence" value="ECO:0007669"/>
    <property type="project" value="UniProtKB-ARBA"/>
</dbReference>
<dbReference type="HAMAP" id="MF_00745">
    <property type="entry name" value="SprT_like"/>
    <property type="match status" value="1"/>
</dbReference>
<dbReference type="InterPro" id="IPR006640">
    <property type="entry name" value="SprT-like_domain"/>
</dbReference>
<dbReference type="InterPro" id="IPR035240">
    <property type="entry name" value="SprT_Zn_ribbon"/>
</dbReference>
<dbReference type="InterPro" id="IPR023524">
    <property type="entry name" value="Uncharacterised_SprT-like"/>
</dbReference>
<dbReference type="NCBIfam" id="NF003339">
    <property type="entry name" value="PRK04351.1"/>
    <property type="match status" value="1"/>
</dbReference>
<dbReference type="Pfam" id="PF10263">
    <property type="entry name" value="SprT-like"/>
    <property type="match status" value="1"/>
</dbReference>
<dbReference type="Pfam" id="PF17283">
    <property type="entry name" value="Zn_ribbon_SprT"/>
    <property type="match status" value="1"/>
</dbReference>
<dbReference type="SMART" id="SM00731">
    <property type="entry name" value="SprT"/>
    <property type="match status" value="1"/>
</dbReference>
<evidence type="ECO:0000255" key="1">
    <source>
        <dbReference type="HAMAP-Rule" id="MF_00745"/>
    </source>
</evidence>
<proteinExistence type="inferred from homology"/>
<name>SPRTL_BACC3</name>
<organism>
    <name type="scientific">Bacillus cereus (strain 03BB102)</name>
    <dbReference type="NCBI Taxonomy" id="572264"/>
    <lineage>
        <taxon>Bacteria</taxon>
        <taxon>Bacillati</taxon>
        <taxon>Bacillota</taxon>
        <taxon>Bacilli</taxon>
        <taxon>Bacillales</taxon>
        <taxon>Bacillaceae</taxon>
        <taxon>Bacillus</taxon>
        <taxon>Bacillus cereus group</taxon>
    </lineage>
</organism>
<gene>
    <name type="ordered locus">BCA_0293</name>
</gene>
<reference key="1">
    <citation type="submission" date="2009-02" db="EMBL/GenBank/DDBJ databases">
        <title>Genome sequence of Bacillus cereus 03BB102.</title>
        <authorList>
            <person name="Dodson R.J."/>
            <person name="Jackson P."/>
            <person name="Munk A.C."/>
            <person name="Brettin T."/>
            <person name="Bruce D."/>
            <person name="Detter C."/>
            <person name="Tapia R."/>
            <person name="Han C."/>
            <person name="Sutton G."/>
            <person name="Sims D."/>
        </authorList>
    </citation>
    <scope>NUCLEOTIDE SEQUENCE [LARGE SCALE GENOMIC DNA]</scope>
    <source>
        <strain>03BB102</strain>
    </source>
</reference>
<protein>
    <recommendedName>
        <fullName evidence="1">Protein SprT-like</fullName>
    </recommendedName>
</protein>
<accession>C1EUA1</accession>
<keyword id="KW-0963">Cytoplasm</keyword>
<keyword id="KW-0479">Metal-binding</keyword>
<keyword id="KW-0862">Zinc</keyword>
<sequence>MDEQEIQRLVEEVSLQYFGMPFLHKAMFNRRLRTTGGRYLLNTHNIELNYRYYEMYGKEELVGIVKHELCHYHLHITGRGYKHRDKDFRELLKAVDAPRFCKRMVNAEKEKRVYVYECMECLLQYVRRRQINTKRYVCGKCKGKLNLIKKTS</sequence>